<evidence type="ECO:0000255" key="1">
    <source>
        <dbReference type="HAMAP-Rule" id="MF_00439"/>
    </source>
</evidence>
<protein>
    <recommendedName>
        <fullName evidence="1">Photosystem I assembly protein Ycf3</fullName>
    </recommendedName>
</protein>
<name>YCF3_PROM2</name>
<feature type="chain" id="PRO_0000325042" description="Photosystem I assembly protein Ycf3">
    <location>
        <begin position="1"/>
        <end position="173"/>
    </location>
</feature>
<feature type="repeat" description="TPR 1">
    <location>
        <begin position="35"/>
        <end position="68"/>
    </location>
</feature>
<feature type="repeat" description="TPR 2">
    <location>
        <begin position="72"/>
        <end position="105"/>
    </location>
</feature>
<feature type="repeat" description="TPR 3">
    <location>
        <begin position="120"/>
        <end position="153"/>
    </location>
</feature>
<sequence>MPSNQNRDNFIDKAFTVIAESIVKIMPIAEKEKKAYIYYRDGLAAQNNGDYSEALEYYKESLLLEENKIDRGETLKNMAIIYMSNGEEDLSIETYEKALVENPKQPSCLKNIGLIYEKRGRYAEQNGDLDQRDIWYDKAAEVWSKAVRLYPGGYLDIENWLKNSGRSSIDMYL</sequence>
<gene>
    <name evidence="1" type="primary">ycf3</name>
    <name type="ordered locus">P9215_01491</name>
</gene>
<keyword id="KW-0472">Membrane</keyword>
<keyword id="KW-0602">Photosynthesis</keyword>
<keyword id="KW-0677">Repeat</keyword>
<keyword id="KW-0793">Thylakoid</keyword>
<keyword id="KW-0802">TPR repeat</keyword>
<dbReference type="EMBL" id="CP000825">
    <property type="protein sequence ID" value="ABV49768.1"/>
    <property type="molecule type" value="Genomic_DNA"/>
</dbReference>
<dbReference type="RefSeq" id="WP_012006947.1">
    <property type="nucleotide sequence ID" value="NC_009840.1"/>
</dbReference>
<dbReference type="SMR" id="A8G2D7"/>
<dbReference type="STRING" id="93060.P9215_01491"/>
<dbReference type="KEGG" id="pmh:P9215_01491"/>
<dbReference type="eggNOG" id="COG3063">
    <property type="taxonomic scope" value="Bacteria"/>
</dbReference>
<dbReference type="HOGENOM" id="CLU_141248_0_0_3"/>
<dbReference type="OrthoDB" id="9429505at2"/>
<dbReference type="Proteomes" id="UP000002014">
    <property type="component" value="Chromosome"/>
</dbReference>
<dbReference type="GO" id="GO:0031676">
    <property type="term" value="C:plasma membrane-derived thylakoid membrane"/>
    <property type="evidence" value="ECO:0007669"/>
    <property type="project" value="UniProtKB-SubCell"/>
</dbReference>
<dbReference type="GO" id="GO:0015979">
    <property type="term" value="P:photosynthesis"/>
    <property type="evidence" value="ECO:0007669"/>
    <property type="project" value="UniProtKB-UniRule"/>
</dbReference>
<dbReference type="Gene3D" id="1.25.40.10">
    <property type="entry name" value="Tetratricopeptide repeat domain"/>
    <property type="match status" value="1"/>
</dbReference>
<dbReference type="HAMAP" id="MF_00439">
    <property type="entry name" value="Ycf3"/>
    <property type="match status" value="1"/>
</dbReference>
<dbReference type="InterPro" id="IPR022818">
    <property type="entry name" value="PSI_Ycf3_assembly"/>
</dbReference>
<dbReference type="InterPro" id="IPR011990">
    <property type="entry name" value="TPR-like_helical_dom_sf"/>
</dbReference>
<dbReference type="InterPro" id="IPR019734">
    <property type="entry name" value="TPR_rpt"/>
</dbReference>
<dbReference type="InterPro" id="IPR051685">
    <property type="entry name" value="Ycf3/AcsC/BcsC/TPR_MFPF"/>
</dbReference>
<dbReference type="NCBIfam" id="NF002725">
    <property type="entry name" value="PRK02603.1"/>
    <property type="match status" value="1"/>
</dbReference>
<dbReference type="PANTHER" id="PTHR44943">
    <property type="entry name" value="CELLULOSE SYNTHASE OPERON PROTEIN C"/>
    <property type="match status" value="1"/>
</dbReference>
<dbReference type="PANTHER" id="PTHR44943:SF8">
    <property type="entry name" value="TPR REPEAT-CONTAINING PROTEIN MJ0263"/>
    <property type="match status" value="1"/>
</dbReference>
<dbReference type="Pfam" id="PF13176">
    <property type="entry name" value="TPR_7"/>
    <property type="match status" value="1"/>
</dbReference>
<dbReference type="Pfam" id="PF13181">
    <property type="entry name" value="TPR_8"/>
    <property type="match status" value="1"/>
</dbReference>
<dbReference type="SMART" id="SM00028">
    <property type="entry name" value="TPR"/>
    <property type="match status" value="3"/>
</dbReference>
<dbReference type="SUPFAM" id="SSF48452">
    <property type="entry name" value="TPR-like"/>
    <property type="match status" value="1"/>
</dbReference>
<dbReference type="PROSITE" id="PS50005">
    <property type="entry name" value="TPR"/>
    <property type="match status" value="2"/>
</dbReference>
<dbReference type="PROSITE" id="PS50293">
    <property type="entry name" value="TPR_REGION"/>
    <property type="match status" value="1"/>
</dbReference>
<proteinExistence type="inferred from homology"/>
<organism>
    <name type="scientific">Prochlorococcus marinus (strain MIT 9215)</name>
    <dbReference type="NCBI Taxonomy" id="93060"/>
    <lineage>
        <taxon>Bacteria</taxon>
        <taxon>Bacillati</taxon>
        <taxon>Cyanobacteriota</taxon>
        <taxon>Cyanophyceae</taxon>
        <taxon>Synechococcales</taxon>
        <taxon>Prochlorococcaceae</taxon>
        <taxon>Prochlorococcus</taxon>
    </lineage>
</organism>
<comment type="function">
    <text evidence="1">Essential for the assembly of the photosystem I (PSI) complex. May act as a chaperone-like factor to guide the assembly of the PSI subunits.</text>
</comment>
<comment type="subcellular location">
    <subcellularLocation>
        <location evidence="1">Cellular thylakoid membrane</location>
        <topology evidence="1">Peripheral membrane protein</topology>
    </subcellularLocation>
</comment>
<comment type="similarity">
    <text evidence="1">Belongs to the Ycf3 family.</text>
</comment>
<reference key="1">
    <citation type="journal article" date="2007" name="PLoS Genet.">
        <title>Patterns and implications of gene gain and loss in the evolution of Prochlorococcus.</title>
        <authorList>
            <person name="Kettler G.C."/>
            <person name="Martiny A.C."/>
            <person name="Huang K."/>
            <person name="Zucker J."/>
            <person name="Coleman M.L."/>
            <person name="Rodrigue S."/>
            <person name="Chen F."/>
            <person name="Lapidus A."/>
            <person name="Ferriera S."/>
            <person name="Johnson J."/>
            <person name="Steglich C."/>
            <person name="Church G.M."/>
            <person name="Richardson P."/>
            <person name="Chisholm S.W."/>
        </authorList>
    </citation>
    <scope>NUCLEOTIDE SEQUENCE [LARGE SCALE GENOMIC DNA]</scope>
    <source>
        <strain>MIT 9215</strain>
    </source>
</reference>
<accession>A8G2D7</accession>